<accession>Q0VSY7</accession>
<proteinExistence type="inferred from homology"/>
<feature type="chain" id="PRO_1000025167" description="Glutamate--cysteine ligase">
    <location>
        <begin position="1"/>
        <end position="525"/>
    </location>
</feature>
<keyword id="KW-0067">ATP-binding</keyword>
<keyword id="KW-0317">Glutathione biosynthesis</keyword>
<keyword id="KW-0436">Ligase</keyword>
<keyword id="KW-0547">Nucleotide-binding</keyword>
<keyword id="KW-1185">Reference proteome</keyword>
<name>GSH1_ALCBS</name>
<organism>
    <name type="scientific">Alcanivorax borkumensis (strain ATCC 700651 / DSM 11573 / NCIMB 13689 / SK2)</name>
    <dbReference type="NCBI Taxonomy" id="393595"/>
    <lineage>
        <taxon>Bacteria</taxon>
        <taxon>Pseudomonadati</taxon>
        <taxon>Pseudomonadota</taxon>
        <taxon>Gammaproteobacteria</taxon>
        <taxon>Oceanospirillales</taxon>
        <taxon>Alcanivoracaceae</taxon>
        <taxon>Alcanivorax</taxon>
    </lineage>
</organism>
<protein>
    <recommendedName>
        <fullName evidence="1">Glutamate--cysteine ligase</fullName>
        <ecNumber evidence="1">6.3.2.2</ecNumber>
    </recommendedName>
    <alternativeName>
        <fullName evidence="1">Gamma-ECS</fullName>
        <shortName evidence="1">GCS</shortName>
    </alternativeName>
    <alternativeName>
        <fullName evidence="1">Gamma-glutamylcysteine synthetase</fullName>
    </alternativeName>
</protein>
<dbReference type="EC" id="6.3.2.2" evidence="1"/>
<dbReference type="EMBL" id="AM286690">
    <property type="protein sequence ID" value="CAL15711.1"/>
    <property type="molecule type" value="Genomic_DNA"/>
</dbReference>
<dbReference type="RefSeq" id="WP_011587559.1">
    <property type="nucleotide sequence ID" value="NC_008260.1"/>
</dbReference>
<dbReference type="SMR" id="Q0VSY7"/>
<dbReference type="STRING" id="393595.ABO_0263"/>
<dbReference type="KEGG" id="abo:ABO_0263"/>
<dbReference type="eggNOG" id="COG2918">
    <property type="taxonomic scope" value="Bacteria"/>
</dbReference>
<dbReference type="HOGENOM" id="CLU_020728_3_0_6"/>
<dbReference type="OrthoDB" id="9803907at2"/>
<dbReference type="UniPathway" id="UPA00142">
    <property type="reaction ID" value="UER00209"/>
</dbReference>
<dbReference type="Proteomes" id="UP000008871">
    <property type="component" value="Chromosome"/>
</dbReference>
<dbReference type="GO" id="GO:0005829">
    <property type="term" value="C:cytosol"/>
    <property type="evidence" value="ECO:0007669"/>
    <property type="project" value="TreeGrafter"/>
</dbReference>
<dbReference type="GO" id="GO:0005524">
    <property type="term" value="F:ATP binding"/>
    <property type="evidence" value="ECO:0007669"/>
    <property type="project" value="UniProtKB-KW"/>
</dbReference>
<dbReference type="GO" id="GO:0004357">
    <property type="term" value="F:glutamate-cysteine ligase activity"/>
    <property type="evidence" value="ECO:0007669"/>
    <property type="project" value="UniProtKB-UniRule"/>
</dbReference>
<dbReference type="GO" id="GO:0046872">
    <property type="term" value="F:metal ion binding"/>
    <property type="evidence" value="ECO:0007669"/>
    <property type="project" value="TreeGrafter"/>
</dbReference>
<dbReference type="GO" id="GO:0006750">
    <property type="term" value="P:glutathione biosynthetic process"/>
    <property type="evidence" value="ECO:0007669"/>
    <property type="project" value="UniProtKB-UniRule"/>
</dbReference>
<dbReference type="Gene3D" id="3.30.590.20">
    <property type="match status" value="1"/>
</dbReference>
<dbReference type="HAMAP" id="MF_00578">
    <property type="entry name" value="Glu_cys_ligase"/>
    <property type="match status" value="1"/>
</dbReference>
<dbReference type="InterPro" id="IPR014746">
    <property type="entry name" value="Gln_synth/guanido_kin_cat_dom"/>
</dbReference>
<dbReference type="InterPro" id="IPR007370">
    <property type="entry name" value="Glu_cys_ligase"/>
</dbReference>
<dbReference type="InterPro" id="IPR006334">
    <property type="entry name" value="Glut_cys_ligase"/>
</dbReference>
<dbReference type="NCBIfam" id="TIGR01434">
    <property type="entry name" value="glu_cys_ligase"/>
    <property type="match status" value="1"/>
</dbReference>
<dbReference type="PANTHER" id="PTHR38761">
    <property type="entry name" value="GLUTAMATE--CYSTEINE LIGASE"/>
    <property type="match status" value="1"/>
</dbReference>
<dbReference type="PANTHER" id="PTHR38761:SF1">
    <property type="entry name" value="GLUTAMATE--CYSTEINE LIGASE"/>
    <property type="match status" value="1"/>
</dbReference>
<dbReference type="Pfam" id="PF04262">
    <property type="entry name" value="Glu_cys_ligase"/>
    <property type="match status" value="1"/>
</dbReference>
<dbReference type="SUPFAM" id="SSF55931">
    <property type="entry name" value="Glutamine synthetase/guanido kinase"/>
    <property type="match status" value="1"/>
</dbReference>
<gene>
    <name evidence="1" type="primary">gshA</name>
    <name type="ordered locus">ABO_0263</name>
</gene>
<sequence length="525" mass="59733">MKHLEQRIHALLNADAAATLAGIRRGIEKESLRITTDGTLAQTPHPRALGSALTHPYITTDYSEALLEFITPPSTELHKPIEFLEQLHRYVYSHIGDEVLWVNSMPCMIGKDSDVPVAQYGSSNVGRMKTVYREGLGHRYGRKMQTIAGIHYNFSYPDAFWKLNQQLEGDNAPLQDYISRRYFDLTRNFQRYSWLLVYLFGASPALCASFLAGREHDLLERFDHSLYRPQATSLRMSDLGYQNNAQSSLAISYNNLDEYVSTLTHAINTPEPAYEKMGVKVTDADGNVKYQQLNANILQIENEYYSSIRPKRTIKPGERPTTALQERGVEYIEIRALDLNPFEPVGINQQEIRFLDLFATYCLLRESPQLEKCDLHASKENLRKVVYDGRNTDIQLYNWGKSVSLKNWASEKLTQMQPIAELFDRAHGGNNYAEALAHQQEKVDNPSATPSAQILEQLESRNQGFFQFAMEQALAHRDHFLSGQRCDATNQQLEALAADSLAEQAAGEAADQQSFEEYLADYFHD</sequence>
<evidence type="ECO:0000255" key="1">
    <source>
        <dbReference type="HAMAP-Rule" id="MF_00578"/>
    </source>
</evidence>
<reference key="1">
    <citation type="journal article" date="2006" name="Nat. Biotechnol.">
        <title>Genome sequence of the ubiquitous hydrocarbon-degrading marine bacterium Alcanivorax borkumensis.</title>
        <authorList>
            <person name="Schneiker S."/>
            <person name="Martins dos Santos V.A.P."/>
            <person name="Bartels D."/>
            <person name="Bekel T."/>
            <person name="Brecht M."/>
            <person name="Buhrmester J."/>
            <person name="Chernikova T.N."/>
            <person name="Denaro R."/>
            <person name="Ferrer M."/>
            <person name="Gertler C."/>
            <person name="Goesmann A."/>
            <person name="Golyshina O.V."/>
            <person name="Kaminski F."/>
            <person name="Khachane A.N."/>
            <person name="Lang S."/>
            <person name="Linke B."/>
            <person name="McHardy A.C."/>
            <person name="Meyer F."/>
            <person name="Nechitaylo T."/>
            <person name="Puehler A."/>
            <person name="Regenhardt D."/>
            <person name="Rupp O."/>
            <person name="Sabirova J.S."/>
            <person name="Selbitschka W."/>
            <person name="Yakimov M.M."/>
            <person name="Timmis K.N."/>
            <person name="Vorhoelter F.-J."/>
            <person name="Weidner S."/>
            <person name="Kaiser O."/>
            <person name="Golyshin P.N."/>
        </authorList>
    </citation>
    <scope>NUCLEOTIDE SEQUENCE [LARGE SCALE GENOMIC DNA]</scope>
    <source>
        <strain>ATCC 700651 / DSM 11573 / NCIMB 13689 / SK2</strain>
    </source>
</reference>
<comment type="catalytic activity">
    <reaction evidence="1">
        <text>L-cysteine + L-glutamate + ATP = gamma-L-glutamyl-L-cysteine + ADP + phosphate + H(+)</text>
        <dbReference type="Rhea" id="RHEA:13285"/>
        <dbReference type="ChEBI" id="CHEBI:15378"/>
        <dbReference type="ChEBI" id="CHEBI:29985"/>
        <dbReference type="ChEBI" id="CHEBI:30616"/>
        <dbReference type="ChEBI" id="CHEBI:35235"/>
        <dbReference type="ChEBI" id="CHEBI:43474"/>
        <dbReference type="ChEBI" id="CHEBI:58173"/>
        <dbReference type="ChEBI" id="CHEBI:456216"/>
        <dbReference type="EC" id="6.3.2.2"/>
    </reaction>
</comment>
<comment type="pathway">
    <text evidence="1">Sulfur metabolism; glutathione biosynthesis; glutathione from L-cysteine and L-glutamate: step 1/2.</text>
</comment>
<comment type="similarity">
    <text evidence="1">Belongs to the glutamate--cysteine ligase type 1 family. Type 1 subfamily.</text>
</comment>